<gene>
    <name evidence="1" type="primary">trpB</name>
    <name type="ordered locus">tll2475</name>
</gene>
<protein>
    <recommendedName>
        <fullName evidence="1">Tryptophan synthase beta chain</fullName>
        <ecNumber evidence="1">4.2.1.20</ecNumber>
    </recommendedName>
</protein>
<reference key="1">
    <citation type="journal article" date="2002" name="DNA Res.">
        <title>Complete genome structure of the thermophilic cyanobacterium Thermosynechococcus elongatus BP-1.</title>
        <authorList>
            <person name="Nakamura Y."/>
            <person name="Kaneko T."/>
            <person name="Sato S."/>
            <person name="Ikeuchi M."/>
            <person name="Katoh H."/>
            <person name="Sasamoto S."/>
            <person name="Watanabe A."/>
            <person name="Iriguchi M."/>
            <person name="Kawashima K."/>
            <person name="Kimura T."/>
            <person name="Kishida Y."/>
            <person name="Kiyokawa C."/>
            <person name="Kohara M."/>
            <person name="Matsumoto M."/>
            <person name="Matsuno A."/>
            <person name="Nakazaki N."/>
            <person name="Shimpo S."/>
            <person name="Sugimoto M."/>
            <person name="Takeuchi C."/>
            <person name="Yamada M."/>
            <person name="Tabata S."/>
        </authorList>
    </citation>
    <scope>NUCLEOTIDE SEQUENCE [LARGE SCALE GENOMIC DNA]</scope>
    <source>
        <strain>NIES-2133 / IAM M-273 / BP-1</strain>
    </source>
</reference>
<sequence>MTVAPSAALSAAARPDARGRFGRFGGKYVPETLMPALSELEAAFAHYRQDPDFQAELQQLLRDYVGRPSPLYFAERLSAHYAHDQVQPQIYLKREDLNHTGAHKINNALGQVLLAKRMGKQRIIAETGAGQHGVATATVCARFGLQCVIYMGVQDMERQRLNVLRMRLLGAEVAPVSAGTGTLKDATSEAIRDWVTNVETTHYILGSVAGPHPYPMLVREFHAVIGAETRQQCLEKWGGLPDILLACVGGGSNAMGLFHEFVEEPQVRLIGVEAAGQGLDTGHHAATLTKGEVGVLHGAMSYLLQDADGQVVEAHSISAGLDYPGVGPEHSYLKDIGRAEYYSVTDTEAVAACVRLAQLEGILPALETAHALAYLETLCPQLTGQPRIVINCSGRGDKDVETIGRYFEAQ</sequence>
<keyword id="KW-0028">Amino-acid biosynthesis</keyword>
<keyword id="KW-0057">Aromatic amino acid biosynthesis</keyword>
<keyword id="KW-0456">Lyase</keyword>
<keyword id="KW-0663">Pyridoxal phosphate</keyword>
<keyword id="KW-1185">Reference proteome</keyword>
<keyword id="KW-0822">Tryptophan biosynthesis</keyword>
<dbReference type="EC" id="4.2.1.20" evidence="1"/>
<dbReference type="EMBL" id="BA000039">
    <property type="protein sequence ID" value="BAC10026.1"/>
    <property type="molecule type" value="Genomic_DNA"/>
</dbReference>
<dbReference type="RefSeq" id="NP_683264.1">
    <property type="nucleotide sequence ID" value="NC_004113.1"/>
</dbReference>
<dbReference type="RefSeq" id="WP_011058306.1">
    <property type="nucleotide sequence ID" value="NC_004113.1"/>
</dbReference>
<dbReference type="SMR" id="Q8DG49"/>
<dbReference type="STRING" id="197221.gene:10749096"/>
<dbReference type="EnsemblBacteria" id="BAC10026">
    <property type="protein sequence ID" value="BAC10026"/>
    <property type="gene ID" value="BAC10026"/>
</dbReference>
<dbReference type="KEGG" id="tel:tll2475"/>
<dbReference type="PATRIC" id="fig|197221.4.peg.2600"/>
<dbReference type="eggNOG" id="COG0133">
    <property type="taxonomic scope" value="Bacteria"/>
</dbReference>
<dbReference type="UniPathway" id="UPA00035">
    <property type="reaction ID" value="UER00044"/>
</dbReference>
<dbReference type="Proteomes" id="UP000000440">
    <property type="component" value="Chromosome"/>
</dbReference>
<dbReference type="GO" id="GO:0005737">
    <property type="term" value="C:cytoplasm"/>
    <property type="evidence" value="ECO:0007669"/>
    <property type="project" value="TreeGrafter"/>
</dbReference>
<dbReference type="GO" id="GO:0004834">
    <property type="term" value="F:tryptophan synthase activity"/>
    <property type="evidence" value="ECO:0007669"/>
    <property type="project" value="UniProtKB-UniRule"/>
</dbReference>
<dbReference type="CDD" id="cd06446">
    <property type="entry name" value="Trp-synth_B"/>
    <property type="match status" value="1"/>
</dbReference>
<dbReference type="FunFam" id="3.40.50.1100:FF:000001">
    <property type="entry name" value="Tryptophan synthase beta chain"/>
    <property type="match status" value="1"/>
</dbReference>
<dbReference type="FunFam" id="3.40.50.1100:FF:000004">
    <property type="entry name" value="Tryptophan synthase beta chain"/>
    <property type="match status" value="1"/>
</dbReference>
<dbReference type="Gene3D" id="3.40.50.1100">
    <property type="match status" value="2"/>
</dbReference>
<dbReference type="HAMAP" id="MF_00133">
    <property type="entry name" value="Trp_synth_beta"/>
    <property type="match status" value="1"/>
</dbReference>
<dbReference type="InterPro" id="IPR006653">
    <property type="entry name" value="Trp_synth_b_CS"/>
</dbReference>
<dbReference type="InterPro" id="IPR006654">
    <property type="entry name" value="Trp_synth_beta"/>
</dbReference>
<dbReference type="InterPro" id="IPR023026">
    <property type="entry name" value="Trp_synth_beta/beta-like"/>
</dbReference>
<dbReference type="InterPro" id="IPR001926">
    <property type="entry name" value="TrpB-like_PALP"/>
</dbReference>
<dbReference type="InterPro" id="IPR036052">
    <property type="entry name" value="TrpB-like_PALP_sf"/>
</dbReference>
<dbReference type="NCBIfam" id="TIGR00263">
    <property type="entry name" value="trpB"/>
    <property type="match status" value="1"/>
</dbReference>
<dbReference type="PANTHER" id="PTHR48077:SF3">
    <property type="entry name" value="TRYPTOPHAN SYNTHASE"/>
    <property type="match status" value="1"/>
</dbReference>
<dbReference type="PANTHER" id="PTHR48077">
    <property type="entry name" value="TRYPTOPHAN SYNTHASE-RELATED"/>
    <property type="match status" value="1"/>
</dbReference>
<dbReference type="Pfam" id="PF00291">
    <property type="entry name" value="PALP"/>
    <property type="match status" value="1"/>
</dbReference>
<dbReference type="PIRSF" id="PIRSF001413">
    <property type="entry name" value="Trp_syn_beta"/>
    <property type="match status" value="1"/>
</dbReference>
<dbReference type="SUPFAM" id="SSF53686">
    <property type="entry name" value="Tryptophan synthase beta subunit-like PLP-dependent enzymes"/>
    <property type="match status" value="1"/>
</dbReference>
<dbReference type="PROSITE" id="PS00168">
    <property type="entry name" value="TRP_SYNTHASE_BETA"/>
    <property type="match status" value="1"/>
</dbReference>
<name>TRPB_THEVB</name>
<evidence type="ECO:0000255" key="1">
    <source>
        <dbReference type="HAMAP-Rule" id="MF_00133"/>
    </source>
</evidence>
<proteinExistence type="inferred from homology"/>
<comment type="function">
    <text evidence="1">The beta subunit is responsible for the synthesis of L-tryptophan from indole and L-serine.</text>
</comment>
<comment type="catalytic activity">
    <reaction evidence="1">
        <text>(1S,2R)-1-C-(indol-3-yl)glycerol 3-phosphate + L-serine = D-glyceraldehyde 3-phosphate + L-tryptophan + H2O</text>
        <dbReference type="Rhea" id="RHEA:10532"/>
        <dbReference type="ChEBI" id="CHEBI:15377"/>
        <dbReference type="ChEBI" id="CHEBI:33384"/>
        <dbReference type="ChEBI" id="CHEBI:57912"/>
        <dbReference type="ChEBI" id="CHEBI:58866"/>
        <dbReference type="ChEBI" id="CHEBI:59776"/>
        <dbReference type="EC" id="4.2.1.20"/>
    </reaction>
</comment>
<comment type="cofactor">
    <cofactor evidence="1">
        <name>pyridoxal 5'-phosphate</name>
        <dbReference type="ChEBI" id="CHEBI:597326"/>
    </cofactor>
</comment>
<comment type="pathway">
    <text evidence="1">Amino-acid biosynthesis; L-tryptophan biosynthesis; L-tryptophan from chorismate: step 5/5.</text>
</comment>
<comment type="subunit">
    <text evidence="1">Tetramer of two alpha and two beta chains.</text>
</comment>
<comment type="similarity">
    <text evidence="1">Belongs to the TrpB family.</text>
</comment>
<organism>
    <name type="scientific">Thermosynechococcus vestitus (strain NIES-2133 / IAM M-273 / BP-1)</name>
    <dbReference type="NCBI Taxonomy" id="197221"/>
    <lineage>
        <taxon>Bacteria</taxon>
        <taxon>Bacillati</taxon>
        <taxon>Cyanobacteriota</taxon>
        <taxon>Cyanophyceae</taxon>
        <taxon>Acaryochloridales</taxon>
        <taxon>Thermosynechococcaceae</taxon>
        <taxon>Thermosynechococcus</taxon>
    </lineage>
</organism>
<feature type="chain" id="PRO_0000099010" description="Tryptophan synthase beta chain">
    <location>
        <begin position="1"/>
        <end position="410"/>
    </location>
</feature>
<feature type="modified residue" description="N6-(pyridoxal phosphate)lysine" evidence="1">
    <location>
        <position position="104"/>
    </location>
</feature>
<accession>Q8DG49</accession>